<dbReference type="EC" id="2.6.1.9" evidence="1"/>
<dbReference type="EMBL" id="AP007255">
    <property type="protein sequence ID" value="BAE52778.1"/>
    <property type="molecule type" value="Genomic_DNA"/>
</dbReference>
<dbReference type="RefSeq" id="WP_011386328.1">
    <property type="nucleotide sequence ID" value="NC_007626.1"/>
</dbReference>
<dbReference type="SMR" id="Q2W047"/>
<dbReference type="STRING" id="342108.amb3974"/>
<dbReference type="KEGG" id="mag:amb3974"/>
<dbReference type="HOGENOM" id="CLU_017584_3_3_5"/>
<dbReference type="OrthoDB" id="9809616at2"/>
<dbReference type="UniPathway" id="UPA00031">
    <property type="reaction ID" value="UER00012"/>
</dbReference>
<dbReference type="Proteomes" id="UP000007058">
    <property type="component" value="Chromosome"/>
</dbReference>
<dbReference type="GO" id="GO:0004400">
    <property type="term" value="F:histidinol-phosphate transaminase activity"/>
    <property type="evidence" value="ECO:0007669"/>
    <property type="project" value="UniProtKB-UniRule"/>
</dbReference>
<dbReference type="GO" id="GO:0030170">
    <property type="term" value="F:pyridoxal phosphate binding"/>
    <property type="evidence" value="ECO:0007669"/>
    <property type="project" value="InterPro"/>
</dbReference>
<dbReference type="GO" id="GO:0000105">
    <property type="term" value="P:L-histidine biosynthetic process"/>
    <property type="evidence" value="ECO:0007669"/>
    <property type="project" value="UniProtKB-UniRule"/>
</dbReference>
<dbReference type="CDD" id="cd00609">
    <property type="entry name" value="AAT_like"/>
    <property type="match status" value="1"/>
</dbReference>
<dbReference type="Gene3D" id="3.90.1150.10">
    <property type="entry name" value="Aspartate Aminotransferase, domain 1"/>
    <property type="match status" value="1"/>
</dbReference>
<dbReference type="Gene3D" id="3.40.640.10">
    <property type="entry name" value="Type I PLP-dependent aspartate aminotransferase-like (Major domain)"/>
    <property type="match status" value="1"/>
</dbReference>
<dbReference type="HAMAP" id="MF_01023">
    <property type="entry name" value="HisC_aminotrans_2"/>
    <property type="match status" value="1"/>
</dbReference>
<dbReference type="InterPro" id="IPR004839">
    <property type="entry name" value="Aminotransferase_I/II_large"/>
</dbReference>
<dbReference type="InterPro" id="IPR005861">
    <property type="entry name" value="HisP_aminotrans"/>
</dbReference>
<dbReference type="InterPro" id="IPR050106">
    <property type="entry name" value="HistidinolP_aminotransfase"/>
</dbReference>
<dbReference type="InterPro" id="IPR015424">
    <property type="entry name" value="PyrdxlP-dep_Trfase"/>
</dbReference>
<dbReference type="InterPro" id="IPR015421">
    <property type="entry name" value="PyrdxlP-dep_Trfase_major"/>
</dbReference>
<dbReference type="InterPro" id="IPR015422">
    <property type="entry name" value="PyrdxlP-dep_Trfase_small"/>
</dbReference>
<dbReference type="NCBIfam" id="TIGR01141">
    <property type="entry name" value="hisC"/>
    <property type="match status" value="1"/>
</dbReference>
<dbReference type="PANTHER" id="PTHR43643:SF3">
    <property type="entry name" value="HISTIDINOL-PHOSPHATE AMINOTRANSFERASE"/>
    <property type="match status" value="1"/>
</dbReference>
<dbReference type="PANTHER" id="PTHR43643">
    <property type="entry name" value="HISTIDINOL-PHOSPHATE AMINOTRANSFERASE 2"/>
    <property type="match status" value="1"/>
</dbReference>
<dbReference type="Pfam" id="PF00155">
    <property type="entry name" value="Aminotran_1_2"/>
    <property type="match status" value="1"/>
</dbReference>
<dbReference type="SUPFAM" id="SSF53383">
    <property type="entry name" value="PLP-dependent transferases"/>
    <property type="match status" value="1"/>
</dbReference>
<feature type="chain" id="PRO_0000319771" description="Histidinol-phosphate aminotransferase">
    <location>
        <begin position="1"/>
        <end position="363"/>
    </location>
</feature>
<feature type="modified residue" description="N6-(pyridoxal phosphate)lysine" evidence="1">
    <location>
        <position position="220"/>
    </location>
</feature>
<gene>
    <name evidence="1" type="primary">hisC</name>
    <name type="ordered locus">amb3974</name>
</gene>
<proteinExistence type="inferred from homology"/>
<organism>
    <name type="scientific">Paramagnetospirillum magneticum (strain ATCC 700264 / AMB-1)</name>
    <name type="common">Magnetospirillum magneticum</name>
    <dbReference type="NCBI Taxonomy" id="342108"/>
    <lineage>
        <taxon>Bacteria</taxon>
        <taxon>Pseudomonadati</taxon>
        <taxon>Pseudomonadota</taxon>
        <taxon>Alphaproteobacteria</taxon>
        <taxon>Rhodospirillales</taxon>
        <taxon>Magnetospirillaceae</taxon>
        <taxon>Paramagnetospirillum</taxon>
    </lineage>
</organism>
<accession>Q2W047</accession>
<sequence>MTAPAPRPGIMDIRPYVGGESAIEGVDRILKLSSNEGALGPSPKAMEALRAMAPEMHRYPDGGAEDLRKAIGARFGLDASRIVCGAGSDELLGILCRAYAGPGDEVLYSAHGFLMYAIAAKACGATPVTAPEVDLTANVDNLLAAVTPRTKILFLANPNNPTGTYLPATEVARLRAGLRADILLVIDAAYTEFVSRNDYSGGIELVEAGDNVVVCRTFSKMYALGGLRLGWAYCPENVAGVLNRVRNPFNVGAPALAAGLAAFNDTAYAELCKSHNDYWLPWLSGQLAELGLTVVPSVCNFILVRFPKDAGKDAGAADKFLRSKGIIVRAMGGYGLGDCLRITIGTGEENQLVVAALKEFVGA</sequence>
<comment type="catalytic activity">
    <reaction evidence="1">
        <text>L-histidinol phosphate + 2-oxoglutarate = 3-(imidazol-4-yl)-2-oxopropyl phosphate + L-glutamate</text>
        <dbReference type="Rhea" id="RHEA:23744"/>
        <dbReference type="ChEBI" id="CHEBI:16810"/>
        <dbReference type="ChEBI" id="CHEBI:29985"/>
        <dbReference type="ChEBI" id="CHEBI:57766"/>
        <dbReference type="ChEBI" id="CHEBI:57980"/>
        <dbReference type="EC" id="2.6.1.9"/>
    </reaction>
</comment>
<comment type="cofactor">
    <cofactor evidence="1">
        <name>pyridoxal 5'-phosphate</name>
        <dbReference type="ChEBI" id="CHEBI:597326"/>
    </cofactor>
</comment>
<comment type="pathway">
    <text evidence="1">Amino-acid biosynthesis; L-histidine biosynthesis; L-histidine from 5-phospho-alpha-D-ribose 1-diphosphate: step 7/9.</text>
</comment>
<comment type="subunit">
    <text evidence="1">Homodimer.</text>
</comment>
<comment type="similarity">
    <text evidence="1">Belongs to the class-II pyridoxal-phosphate-dependent aminotransferase family. Histidinol-phosphate aminotransferase subfamily.</text>
</comment>
<protein>
    <recommendedName>
        <fullName evidence="1">Histidinol-phosphate aminotransferase</fullName>
        <ecNumber evidence="1">2.6.1.9</ecNumber>
    </recommendedName>
    <alternativeName>
        <fullName evidence="1">Imidazole acetol-phosphate transaminase</fullName>
    </alternativeName>
</protein>
<reference key="1">
    <citation type="journal article" date="2005" name="DNA Res.">
        <title>Complete genome sequence of the facultative anaerobic magnetotactic bacterium Magnetospirillum sp. strain AMB-1.</title>
        <authorList>
            <person name="Matsunaga T."/>
            <person name="Okamura Y."/>
            <person name="Fukuda Y."/>
            <person name="Wahyudi A.T."/>
            <person name="Murase Y."/>
            <person name="Takeyama H."/>
        </authorList>
    </citation>
    <scope>NUCLEOTIDE SEQUENCE [LARGE SCALE GENOMIC DNA]</scope>
    <source>
        <strain>ATCC 700264 / AMB-1</strain>
    </source>
</reference>
<evidence type="ECO:0000255" key="1">
    <source>
        <dbReference type="HAMAP-Rule" id="MF_01023"/>
    </source>
</evidence>
<keyword id="KW-0028">Amino-acid biosynthesis</keyword>
<keyword id="KW-0032">Aminotransferase</keyword>
<keyword id="KW-0368">Histidine biosynthesis</keyword>
<keyword id="KW-0663">Pyridoxal phosphate</keyword>
<keyword id="KW-0808">Transferase</keyword>
<name>HIS8_PARM1</name>